<keyword id="KW-1185">Reference proteome</keyword>
<keyword id="KW-0687">Ribonucleoprotein</keyword>
<keyword id="KW-0689">Ribosomal protein</keyword>
<organism>
    <name type="scientific">Haemophilus ducreyi (strain 35000HP / ATCC 700724)</name>
    <dbReference type="NCBI Taxonomy" id="233412"/>
    <lineage>
        <taxon>Bacteria</taxon>
        <taxon>Pseudomonadati</taxon>
        <taxon>Pseudomonadota</taxon>
        <taxon>Gammaproteobacteria</taxon>
        <taxon>Pasteurellales</taxon>
        <taxon>Pasteurellaceae</taxon>
        <taxon>Haemophilus</taxon>
    </lineage>
</organism>
<accession>Q7VKD1</accession>
<protein>
    <recommendedName>
        <fullName evidence="1">Small ribosomal subunit protein uS10</fullName>
    </recommendedName>
    <alternativeName>
        <fullName evidence="2">30S ribosomal protein S10</fullName>
    </alternativeName>
</protein>
<sequence length="103" mass="11737">MQNQRIRIRLKAFDHRLIDQSTAEIVETAKRAGAQVRGPIPLPTRKERFTVLISPHVNKDARDQYEIRTHKRLVDIVEPTEKTVDALMRLDLAAGVDVQISLG</sequence>
<proteinExistence type="inferred from homology"/>
<comment type="function">
    <text evidence="1">Involved in the binding of tRNA to the ribosomes.</text>
</comment>
<comment type="subunit">
    <text evidence="1">Part of the 30S ribosomal subunit.</text>
</comment>
<comment type="similarity">
    <text evidence="1">Belongs to the universal ribosomal protein uS10 family.</text>
</comment>
<reference key="1">
    <citation type="submission" date="2003-06" db="EMBL/GenBank/DDBJ databases">
        <title>The complete genome sequence of Haemophilus ducreyi.</title>
        <authorList>
            <person name="Munson R.S. Jr."/>
            <person name="Ray W.C."/>
            <person name="Mahairas G."/>
            <person name="Sabo P."/>
            <person name="Mungur R."/>
            <person name="Johnson L."/>
            <person name="Nguyen D."/>
            <person name="Wang J."/>
            <person name="Forst C."/>
            <person name="Hood L."/>
        </authorList>
    </citation>
    <scope>NUCLEOTIDE SEQUENCE [LARGE SCALE GENOMIC DNA]</scope>
    <source>
        <strain>35000HP / ATCC 700724</strain>
    </source>
</reference>
<dbReference type="EMBL" id="AE017143">
    <property type="protein sequence ID" value="AAP96701.1"/>
    <property type="molecule type" value="Genomic_DNA"/>
</dbReference>
<dbReference type="RefSeq" id="WP_010945722.1">
    <property type="nucleotide sequence ID" value="NC_002940.2"/>
</dbReference>
<dbReference type="SMR" id="Q7VKD1"/>
<dbReference type="STRING" id="233412.HD_1984"/>
<dbReference type="KEGG" id="hdu:HD_1984"/>
<dbReference type="eggNOG" id="COG0051">
    <property type="taxonomic scope" value="Bacteria"/>
</dbReference>
<dbReference type="HOGENOM" id="CLU_122625_1_3_6"/>
<dbReference type="OrthoDB" id="9804464at2"/>
<dbReference type="Proteomes" id="UP000001022">
    <property type="component" value="Chromosome"/>
</dbReference>
<dbReference type="GO" id="GO:1990904">
    <property type="term" value="C:ribonucleoprotein complex"/>
    <property type="evidence" value="ECO:0007669"/>
    <property type="project" value="UniProtKB-KW"/>
</dbReference>
<dbReference type="GO" id="GO:0005840">
    <property type="term" value="C:ribosome"/>
    <property type="evidence" value="ECO:0007669"/>
    <property type="project" value="UniProtKB-KW"/>
</dbReference>
<dbReference type="GO" id="GO:0003735">
    <property type="term" value="F:structural constituent of ribosome"/>
    <property type="evidence" value="ECO:0007669"/>
    <property type="project" value="InterPro"/>
</dbReference>
<dbReference type="GO" id="GO:0000049">
    <property type="term" value="F:tRNA binding"/>
    <property type="evidence" value="ECO:0007669"/>
    <property type="project" value="UniProtKB-UniRule"/>
</dbReference>
<dbReference type="GO" id="GO:0006412">
    <property type="term" value="P:translation"/>
    <property type="evidence" value="ECO:0007669"/>
    <property type="project" value="UniProtKB-UniRule"/>
</dbReference>
<dbReference type="FunFam" id="3.30.70.600:FF:000001">
    <property type="entry name" value="30S ribosomal protein S10"/>
    <property type="match status" value="1"/>
</dbReference>
<dbReference type="Gene3D" id="3.30.70.600">
    <property type="entry name" value="Ribosomal protein S10 domain"/>
    <property type="match status" value="1"/>
</dbReference>
<dbReference type="HAMAP" id="MF_00508">
    <property type="entry name" value="Ribosomal_uS10"/>
    <property type="match status" value="1"/>
</dbReference>
<dbReference type="InterPro" id="IPR001848">
    <property type="entry name" value="Ribosomal_uS10"/>
</dbReference>
<dbReference type="InterPro" id="IPR018268">
    <property type="entry name" value="Ribosomal_uS10_CS"/>
</dbReference>
<dbReference type="InterPro" id="IPR027486">
    <property type="entry name" value="Ribosomal_uS10_dom"/>
</dbReference>
<dbReference type="InterPro" id="IPR036838">
    <property type="entry name" value="Ribosomal_uS10_dom_sf"/>
</dbReference>
<dbReference type="NCBIfam" id="NF001861">
    <property type="entry name" value="PRK00596.1"/>
    <property type="match status" value="1"/>
</dbReference>
<dbReference type="NCBIfam" id="TIGR01049">
    <property type="entry name" value="rpsJ_bact"/>
    <property type="match status" value="1"/>
</dbReference>
<dbReference type="PANTHER" id="PTHR11700">
    <property type="entry name" value="30S RIBOSOMAL PROTEIN S10 FAMILY MEMBER"/>
    <property type="match status" value="1"/>
</dbReference>
<dbReference type="Pfam" id="PF00338">
    <property type="entry name" value="Ribosomal_S10"/>
    <property type="match status" value="1"/>
</dbReference>
<dbReference type="PRINTS" id="PR00971">
    <property type="entry name" value="RIBOSOMALS10"/>
</dbReference>
<dbReference type="SMART" id="SM01403">
    <property type="entry name" value="Ribosomal_S10"/>
    <property type="match status" value="1"/>
</dbReference>
<dbReference type="SUPFAM" id="SSF54999">
    <property type="entry name" value="Ribosomal protein S10"/>
    <property type="match status" value="1"/>
</dbReference>
<dbReference type="PROSITE" id="PS00361">
    <property type="entry name" value="RIBOSOMAL_S10"/>
    <property type="match status" value="1"/>
</dbReference>
<name>RS10_HAEDU</name>
<gene>
    <name evidence="1" type="primary">rpsJ</name>
    <name type="ordered locus">HD_1984</name>
</gene>
<feature type="chain" id="PRO_0000146536" description="Small ribosomal subunit protein uS10">
    <location>
        <begin position="1"/>
        <end position="103"/>
    </location>
</feature>
<evidence type="ECO:0000255" key="1">
    <source>
        <dbReference type="HAMAP-Rule" id="MF_00508"/>
    </source>
</evidence>
<evidence type="ECO:0000305" key="2"/>